<comment type="function">
    <text evidence="1">Catalyzes the epimerization of the S- and R-forms of NAD(P)HX, a damaged form of NAD(P)H that is a result of enzymatic or heat-dependent hydration. This is a prerequisite for the S-specific NAD(P)H-hydrate dehydratase to allow the repair of both epimers of NAD(P)HX.</text>
</comment>
<comment type="catalytic activity">
    <reaction evidence="1">
        <text>(6R)-NADHX = (6S)-NADHX</text>
        <dbReference type="Rhea" id="RHEA:32215"/>
        <dbReference type="ChEBI" id="CHEBI:64074"/>
        <dbReference type="ChEBI" id="CHEBI:64075"/>
        <dbReference type="EC" id="5.1.99.6"/>
    </reaction>
</comment>
<comment type="catalytic activity">
    <reaction evidence="1">
        <text>(6R)-NADPHX = (6S)-NADPHX</text>
        <dbReference type="Rhea" id="RHEA:32227"/>
        <dbReference type="ChEBI" id="CHEBI:64076"/>
        <dbReference type="ChEBI" id="CHEBI:64077"/>
        <dbReference type="EC" id="5.1.99.6"/>
    </reaction>
</comment>
<comment type="cofactor">
    <cofactor evidence="1">
        <name>K(+)</name>
        <dbReference type="ChEBI" id="CHEBI:29103"/>
    </cofactor>
    <text evidence="1">Binds 1 potassium ion per subunit.</text>
</comment>
<comment type="similarity">
    <text evidence="1">Belongs to the NnrE/AIBP family.</text>
</comment>
<reference key="1">
    <citation type="submission" date="2006-11" db="EMBL/GenBank/DDBJ databases">
        <title>Identification and characterization of a new conjugation/ type IVA secretion system (trb/tra) of L. pneumophila Corby localized on a mobile genomic island.</title>
        <authorList>
            <person name="Gloeckner G."/>
            <person name="Albert-Weissenberger C."/>
            <person name="Weinmann E."/>
            <person name="Jacobi S."/>
            <person name="Schunder E."/>
            <person name="Steinert M."/>
            <person name="Buchrieser C."/>
            <person name="Hacker J."/>
            <person name="Heuner K."/>
        </authorList>
    </citation>
    <scope>NUCLEOTIDE SEQUENCE [LARGE SCALE GENOMIC DNA]</scope>
    <source>
        <strain>Corby</strain>
    </source>
</reference>
<gene>
    <name evidence="1" type="primary">nnrE</name>
    <name type="ordered locus">LPC_3108</name>
</gene>
<accession>A5IHZ5</accession>
<evidence type="ECO:0000255" key="1">
    <source>
        <dbReference type="HAMAP-Rule" id="MF_01966"/>
    </source>
</evidence>
<keyword id="KW-0413">Isomerase</keyword>
<keyword id="KW-0479">Metal-binding</keyword>
<keyword id="KW-0520">NAD</keyword>
<keyword id="KW-0521">NADP</keyword>
<keyword id="KW-0547">Nucleotide-binding</keyword>
<keyword id="KW-0630">Potassium</keyword>
<feature type="chain" id="PRO_0000416361" description="NAD(P)H-hydrate epimerase">
    <location>
        <begin position="1"/>
        <end position="270"/>
    </location>
</feature>
<feature type="domain" description="YjeF N-terminal" evidence="1">
    <location>
        <begin position="25"/>
        <end position="234"/>
    </location>
</feature>
<feature type="binding site" evidence="1">
    <location>
        <begin position="73"/>
        <end position="77"/>
    </location>
    <ligand>
        <name>(6S)-NADPHX</name>
        <dbReference type="ChEBI" id="CHEBI:64076"/>
    </ligand>
</feature>
<feature type="binding site" evidence="1">
    <location>
        <position position="74"/>
    </location>
    <ligand>
        <name>K(+)</name>
        <dbReference type="ChEBI" id="CHEBI:29103"/>
    </ligand>
</feature>
<feature type="binding site" evidence="1">
    <location>
        <position position="144"/>
    </location>
    <ligand>
        <name>K(+)</name>
        <dbReference type="ChEBI" id="CHEBI:29103"/>
    </ligand>
</feature>
<feature type="binding site" evidence="1">
    <location>
        <begin position="148"/>
        <end position="154"/>
    </location>
    <ligand>
        <name>(6S)-NADPHX</name>
        <dbReference type="ChEBI" id="CHEBI:64076"/>
    </ligand>
</feature>
<feature type="binding site" evidence="1">
    <location>
        <position position="177"/>
    </location>
    <ligand>
        <name>(6S)-NADPHX</name>
        <dbReference type="ChEBI" id="CHEBI:64076"/>
    </ligand>
</feature>
<feature type="binding site" evidence="1">
    <location>
        <position position="180"/>
    </location>
    <ligand>
        <name>K(+)</name>
        <dbReference type="ChEBI" id="CHEBI:29103"/>
    </ligand>
</feature>
<organism>
    <name type="scientific">Legionella pneumophila (strain Corby)</name>
    <dbReference type="NCBI Taxonomy" id="400673"/>
    <lineage>
        <taxon>Bacteria</taxon>
        <taxon>Pseudomonadati</taxon>
        <taxon>Pseudomonadota</taxon>
        <taxon>Gammaproteobacteria</taxon>
        <taxon>Legionellales</taxon>
        <taxon>Legionellaceae</taxon>
        <taxon>Legionella</taxon>
    </lineage>
</organism>
<dbReference type="EC" id="5.1.99.6" evidence="1"/>
<dbReference type="EMBL" id="CP000675">
    <property type="protein sequence ID" value="ABQ56995.1"/>
    <property type="molecule type" value="Genomic_DNA"/>
</dbReference>
<dbReference type="RefSeq" id="WP_011947707.1">
    <property type="nucleotide sequence ID" value="NC_009494.2"/>
</dbReference>
<dbReference type="SMR" id="A5IHZ5"/>
<dbReference type="KEGG" id="lpc:LPC_3108"/>
<dbReference type="HOGENOM" id="CLU_024853_0_1_6"/>
<dbReference type="GO" id="GO:0046872">
    <property type="term" value="F:metal ion binding"/>
    <property type="evidence" value="ECO:0007669"/>
    <property type="project" value="UniProtKB-KW"/>
</dbReference>
<dbReference type="GO" id="GO:0052856">
    <property type="term" value="F:NAD(P)HX epimerase activity"/>
    <property type="evidence" value="ECO:0007669"/>
    <property type="project" value="UniProtKB-UniRule"/>
</dbReference>
<dbReference type="GO" id="GO:0000166">
    <property type="term" value="F:nucleotide binding"/>
    <property type="evidence" value="ECO:0007669"/>
    <property type="project" value="UniProtKB-KW"/>
</dbReference>
<dbReference type="Gene3D" id="3.40.50.10260">
    <property type="entry name" value="YjeF N-terminal domain"/>
    <property type="match status" value="1"/>
</dbReference>
<dbReference type="HAMAP" id="MF_01966">
    <property type="entry name" value="NADHX_epimerase"/>
    <property type="match status" value="1"/>
</dbReference>
<dbReference type="InterPro" id="IPR004443">
    <property type="entry name" value="YjeF_N_dom"/>
</dbReference>
<dbReference type="InterPro" id="IPR036652">
    <property type="entry name" value="YjeF_N_dom_sf"/>
</dbReference>
<dbReference type="NCBIfam" id="TIGR00197">
    <property type="entry name" value="yjeF_nterm"/>
    <property type="match status" value="1"/>
</dbReference>
<dbReference type="Pfam" id="PF03853">
    <property type="entry name" value="YjeF_N"/>
    <property type="match status" value="1"/>
</dbReference>
<dbReference type="SUPFAM" id="SSF64153">
    <property type="entry name" value="YjeF N-terminal domain-like"/>
    <property type="match status" value="1"/>
</dbReference>
<dbReference type="PROSITE" id="PS51385">
    <property type="entry name" value="YJEF_N"/>
    <property type="match status" value="1"/>
</dbReference>
<proteinExistence type="inferred from homology"/>
<sequence length="270" mass="30323">MDYYFTKGKPQLVNMKTPIYLVTQFQQLMDLMQNQYEVSCLELMQRSGKAACDFLVYRWPKVKKISIFCGRGDNGGQGYVLAQQAKKMGMVPTVWQVGHQMSMSKPPQMHKEVWYEMNSCHQQGIVLHTYSPDIDLGDPELIVDALFGVGLYGHVRPEIALLLQRLQQFTVPILAIEVPTGINASTGEIAGNALAATATITFLCMKLGLLINDGKIYSGEIAFDDLLAPEAIYQQVKGIEESSLLDSSTIFSKKIWYRNKTQKGWQLSIN</sequence>
<name>NNRE_LEGPC</name>
<protein>
    <recommendedName>
        <fullName evidence="1">NAD(P)H-hydrate epimerase</fullName>
        <ecNumber evidence="1">5.1.99.6</ecNumber>
    </recommendedName>
    <alternativeName>
        <fullName evidence="1">NAD(P)HX epimerase</fullName>
    </alternativeName>
</protein>